<organism>
    <name type="scientific">Campylobacter jejuni subsp. jejuni serotype O:23/36 (strain 81-176)</name>
    <dbReference type="NCBI Taxonomy" id="354242"/>
    <lineage>
        <taxon>Bacteria</taxon>
        <taxon>Pseudomonadati</taxon>
        <taxon>Campylobacterota</taxon>
        <taxon>Epsilonproteobacteria</taxon>
        <taxon>Campylobacterales</taxon>
        <taxon>Campylobacteraceae</taxon>
        <taxon>Campylobacter</taxon>
    </lineage>
</organism>
<evidence type="ECO:0000255" key="1">
    <source>
        <dbReference type="HAMAP-Rule" id="MF_00169"/>
    </source>
</evidence>
<gene>
    <name evidence="1" type="primary">aroQ</name>
    <name type="ordered locus">CJJ81176_0104</name>
</gene>
<keyword id="KW-0028">Amino-acid biosynthesis</keyword>
<keyword id="KW-0057">Aromatic amino acid biosynthesis</keyword>
<keyword id="KW-0456">Lyase</keyword>
<reference key="1">
    <citation type="submission" date="2006-12" db="EMBL/GenBank/DDBJ databases">
        <authorList>
            <person name="Fouts D.E."/>
            <person name="Nelson K.E."/>
            <person name="Sebastian Y."/>
        </authorList>
    </citation>
    <scope>NUCLEOTIDE SEQUENCE [LARGE SCALE GENOMIC DNA]</scope>
    <source>
        <strain>81-176</strain>
    </source>
</reference>
<comment type="function">
    <text evidence="1">Catalyzes a trans-dehydration via an enolate intermediate.</text>
</comment>
<comment type="catalytic activity">
    <reaction evidence="1">
        <text>3-dehydroquinate = 3-dehydroshikimate + H2O</text>
        <dbReference type="Rhea" id="RHEA:21096"/>
        <dbReference type="ChEBI" id="CHEBI:15377"/>
        <dbReference type="ChEBI" id="CHEBI:16630"/>
        <dbReference type="ChEBI" id="CHEBI:32364"/>
        <dbReference type="EC" id="4.2.1.10"/>
    </reaction>
</comment>
<comment type="pathway">
    <text evidence="1">Metabolic intermediate biosynthesis; chorismate biosynthesis; chorismate from D-erythrose 4-phosphate and phosphoenolpyruvate: step 3/7.</text>
</comment>
<comment type="subunit">
    <text evidence="1">Homododecamer.</text>
</comment>
<comment type="similarity">
    <text evidence="1">Belongs to the type-II 3-dehydroquinase family.</text>
</comment>
<name>AROQ_CAMJJ</name>
<protein>
    <recommendedName>
        <fullName evidence="1">3-dehydroquinate dehydratase</fullName>
        <shortName evidence="1">3-dehydroquinase</shortName>
        <ecNumber evidence="1">4.2.1.10</ecNumber>
    </recommendedName>
    <alternativeName>
        <fullName evidence="1">Type II DHQase</fullName>
    </alternativeName>
</protein>
<proteinExistence type="inferred from homology"/>
<feature type="chain" id="PRO_1000023458" description="3-dehydroquinate dehydratase">
    <location>
        <begin position="1"/>
        <end position="159"/>
    </location>
</feature>
<feature type="active site" description="Proton acceptor" evidence="1">
    <location>
        <position position="22"/>
    </location>
</feature>
<feature type="active site" description="Proton donor" evidence="1">
    <location>
        <position position="99"/>
    </location>
</feature>
<feature type="binding site" evidence="1">
    <location>
        <position position="73"/>
    </location>
    <ligand>
        <name>substrate</name>
    </ligand>
</feature>
<feature type="binding site" evidence="1">
    <location>
        <position position="79"/>
    </location>
    <ligand>
        <name>substrate</name>
    </ligand>
</feature>
<feature type="binding site" evidence="1">
    <location>
        <position position="86"/>
    </location>
    <ligand>
        <name>substrate</name>
    </ligand>
</feature>
<feature type="binding site" evidence="1">
    <location>
        <begin position="100"/>
        <end position="101"/>
    </location>
    <ligand>
        <name>substrate</name>
    </ligand>
</feature>
<feature type="binding site" evidence="1">
    <location>
        <position position="110"/>
    </location>
    <ligand>
        <name>substrate</name>
    </ligand>
</feature>
<feature type="site" description="Transition state stabilizer" evidence="1">
    <location>
        <position position="17"/>
    </location>
</feature>
<accession>A1VXF1</accession>
<dbReference type="EC" id="4.2.1.10" evidence="1"/>
<dbReference type="EMBL" id="CP000538">
    <property type="protein sequence ID" value="EAQ71994.1"/>
    <property type="molecule type" value="Genomic_DNA"/>
</dbReference>
<dbReference type="RefSeq" id="WP_002852001.1">
    <property type="nucleotide sequence ID" value="NC_008787.1"/>
</dbReference>
<dbReference type="SMR" id="A1VXF1"/>
<dbReference type="KEGG" id="cjj:CJJ81176_0104"/>
<dbReference type="eggNOG" id="COG0757">
    <property type="taxonomic scope" value="Bacteria"/>
</dbReference>
<dbReference type="HOGENOM" id="CLU_090968_2_0_7"/>
<dbReference type="UniPathway" id="UPA00053">
    <property type="reaction ID" value="UER00086"/>
</dbReference>
<dbReference type="Proteomes" id="UP000000646">
    <property type="component" value="Chromosome"/>
</dbReference>
<dbReference type="GO" id="GO:0003855">
    <property type="term" value="F:3-dehydroquinate dehydratase activity"/>
    <property type="evidence" value="ECO:0007669"/>
    <property type="project" value="UniProtKB-UniRule"/>
</dbReference>
<dbReference type="GO" id="GO:0008652">
    <property type="term" value="P:amino acid biosynthetic process"/>
    <property type="evidence" value="ECO:0007669"/>
    <property type="project" value="UniProtKB-KW"/>
</dbReference>
<dbReference type="GO" id="GO:0009073">
    <property type="term" value="P:aromatic amino acid family biosynthetic process"/>
    <property type="evidence" value="ECO:0007669"/>
    <property type="project" value="UniProtKB-KW"/>
</dbReference>
<dbReference type="GO" id="GO:0009423">
    <property type="term" value="P:chorismate biosynthetic process"/>
    <property type="evidence" value="ECO:0007669"/>
    <property type="project" value="UniProtKB-UniRule"/>
</dbReference>
<dbReference type="GO" id="GO:0019631">
    <property type="term" value="P:quinate catabolic process"/>
    <property type="evidence" value="ECO:0007669"/>
    <property type="project" value="TreeGrafter"/>
</dbReference>
<dbReference type="CDD" id="cd00466">
    <property type="entry name" value="DHQase_II"/>
    <property type="match status" value="1"/>
</dbReference>
<dbReference type="Gene3D" id="3.40.50.9100">
    <property type="entry name" value="Dehydroquinase, class II"/>
    <property type="match status" value="1"/>
</dbReference>
<dbReference type="HAMAP" id="MF_00169">
    <property type="entry name" value="AroQ"/>
    <property type="match status" value="1"/>
</dbReference>
<dbReference type="InterPro" id="IPR001874">
    <property type="entry name" value="DHquinase_II"/>
</dbReference>
<dbReference type="InterPro" id="IPR018509">
    <property type="entry name" value="DHquinase_II_CS"/>
</dbReference>
<dbReference type="InterPro" id="IPR036441">
    <property type="entry name" value="DHquinase_II_sf"/>
</dbReference>
<dbReference type="NCBIfam" id="TIGR01088">
    <property type="entry name" value="aroQ"/>
    <property type="match status" value="1"/>
</dbReference>
<dbReference type="NCBIfam" id="NF003805">
    <property type="entry name" value="PRK05395.1-2"/>
    <property type="match status" value="1"/>
</dbReference>
<dbReference type="NCBIfam" id="NF003806">
    <property type="entry name" value="PRK05395.1-3"/>
    <property type="match status" value="1"/>
</dbReference>
<dbReference type="NCBIfam" id="NF003807">
    <property type="entry name" value="PRK05395.1-4"/>
    <property type="match status" value="1"/>
</dbReference>
<dbReference type="PANTHER" id="PTHR21272">
    <property type="entry name" value="CATABOLIC 3-DEHYDROQUINASE"/>
    <property type="match status" value="1"/>
</dbReference>
<dbReference type="PANTHER" id="PTHR21272:SF3">
    <property type="entry name" value="CATABOLIC 3-DEHYDROQUINASE"/>
    <property type="match status" value="1"/>
</dbReference>
<dbReference type="Pfam" id="PF01220">
    <property type="entry name" value="DHquinase_II"/>
    <property type="match status" value="1"/>
</dbReference>
<dbReference type="PIRSF" id="PIRSF001399">
    <property type="entry name" value="DHquinase_II"/>
    <property type="match status" value="1"/>
</dbReference>
<dbReference type="SUPFAM" id="SSF52304">
    <property type="entry name" value="Type II 3-dehydroquinate dehydratase"/>
    <property type="match status" value="1"/>
</dbReference>
<dbReference type="PROSITE" id="PS01029">
    <property type="entry name" value="DEHYDROQUINASE_II"/>
    <property type="match status" value="1"/>
</dbReference>
<sequence length="159" mass="17595">MKIMIIQGPNVNMLGVREVGIYGAMKMEEIHEQMKLAASQNNVELDFFQSNFEGEIVDKIQECLGTVDGIIINAAGYTHTSVAIRDAIAAVALPTIEVHISNVYRREEFRQKSLIAPVCSGTIVGFGPFGYHLALMGIIQICEQIKNLRAMQQAQQTNK</sequence>